<sequence length="341" mass="37415">MLSPEALTTAVDAAQQAIALADTLDVLARVKTEHLGDRSPLALARQALAVLPKEQRAEAGKRVNAARNAAQRSYDERLATLRAERDAAVLVAEGIDVTLPSTRVPAGARHPIIMLAEHVADTFIAMGWELAEGPEVETEQFNFDALNFPADHPARGEQDTFYIAPEDSRQLLRTHTSPVQIRTLLARELPVYIISIGRTFRTDELDATHTPIFHQVEGLAVDRGLSMAHLRGTLDAFARAEFGPSARTRIRPHFFPFTEPSAEVDVWFANKIGGADWVEWGGCGMVHPNVLRATGIDPDLYSGFAFGMGLERTLQFRNGIPDMRDMVEGDVRFSLPFGVGA</sequence>
<gene>
    <name evidence="1" type="primary">pheS</name>
    <name type="ordered locus">JTY_1663</name>
</gene>
<reference key="1">
    <citation type="journal article" date="2009" name="Vaccine">
        <title>Whole genome sequence analysis of Mycobacterium bovis bacillus Calmette-Guerin (BCG) Tokyo 172: a comparative study of BCG vaccine substrains.</title>
        <authorList>
            <person name="Seki M."/>
            <person name="Honda I."/>
            <person name="Fujita I."/>
            <person name="Yano I."/>
            <person name="Yamamoto S."/>
            <person name="Koyama A."/>
        </authorList>
    </citation>
    <scope>NUCLEOTIDE SEQUENCE [LARGE SCALE GENOMIC DNA]</scope>
    <source>
        <strain>BCG / Tokyo 172 / ATCC 35737 / TMC 1019</strain>
    </source>
</reference>
<keyword id="KW-0030">Aminoacyl-tRNA synthetase</keyword>
<keyword id="KW-0067">ATP-binding</keyword>
<keyword id="KW-0963">Cytoplasm</keyword>
<keyword id="KW-0436">Ligase</keyword>
<keyword id="KW-0460">Magnesium</keyword>
<keyword id="KW-0479">Metal-binding</keyword>
<keyword id="KW-0547">Nucleotide-binding</keyword>
<keyword id="KW-0648">Protein biosynthesis</keyword>
<accession>C1ANS2</accession>
<comment type="catalytic activity">
    <reaction evidence="1">
        <text>tRNA(Phe) + L-phenylalanine + ATP = L-phenylalanyl-tRNA(Phe) + AMP + diphosphate + H(+)</text>
        <dbReference type="Rhea" id="RHEA:19413"/>
        <dbReference type="Rhea" id="RHEA-COMP:9668"/>
        <dbReference type="Rhea" id="RHEA-COMP:9699"/>
        <dbReference type="ChEBI" id="CHEBI:15378"/>
        <dbReference type="ChEBI" id="CHEBI:30616"/>
        <dbReference type="ChEBI" id="CHEBI:33019"/>
        <dbReference type="ChEBI" id="CHEBI:58095"/>
        <dbReference type="ChEBI" id="CHEBI:78442"/>
        <dbReference type="ChEBI" id="CHEBI:78531"/>
        <dbReference type="ChEBI" id="CHEBI:456215"/>
        <dbReference type="EC" id="6.1.1.20"/>
    </reaction>
</comment>
<comment type="cofactor">
    <cofactor evidence="1">
        <name>Mg(2+)</name>
        <dbReference type="ChEBI" id="CHEBI:18420"/>
    </cofactor>
    <text evidence="1">Binds 2 magnesium ions per tetramer.</text>
</comment>
<comment type="subunit">
    <text evidence="1">Tetramer of two alpha and two beta subunits.</text>
</comment>
<comment type="subcellular location">
    <subcellularLocation>
        <location evidence="1">Cytoplasm</location>
    </subcellularLocation>
</comment>
<comment type="similarity">
    <text evidence="1">Belongs to the class-II aminoacyl-tRNA synthetase family. Phe-tRNA synthetase alpha subunit type 1 subfamily.</text>
</comment>
<organism>
    <name type="scientific">Mycobacterium bovis (strain BCG / Tokyo 172 / ATCC 35737 / TMC 1019)</name>
    <dbReference type="NCBI Taxonomy" id="561275"/>
    <lineage>
        <taxon>Bacteria</taxon>
        <taxon>Bacillati</taxon>
        <taxon>Actinomycetota</taxon>
        <taxon>Actinomycetes</taxon>
        <taxon>Mycobacteriales</taxon>
        <taxon>Mycobacteriaceae</taxon>
        <taxon>Mycobacterium</taxon>
        <taxon>Mycobacterium tuberculosis complex</taxon>
    </lineage>
</organism>
<protein>
    <recommendedName>
        <fullName evidence="1">Phenylalanine--tRNA ligase alpha subunit</fullName>
        <ecNumber evidence="1">6.1.1.20</ecNumber>
    </recommendedName>
    <alternativeName>
        <fullName evidence="1">Phenylalanyl-tRNA synthetase alpha subunit</fullName>
        <shortName evidence="1">PheRS</shortName>
    </alternativeName>
</protein>
<proteinExistence type="inferred from homology"/>
<dbReference type="EC" id="6.1.1.20" evidence="1"/>
<dbReference type="EMBL" id="AP010918">
    <property type="protein sequence ID" value="BAH25951.1"/>
    <property type="molecule type" value="Genomic_DNA"/>
</dbReference>
<dbReference type="SMR" id="C1ANS2"/>
<dbReference type="KEGG" id="mbt:JTY_1663"/>
<dbReference type="HOGENOM" id="CLU_025086_0_0_11"/>
<dbReference type="GO" id="GO:0005737">
    <property type="term" value="C:cytoplasm"/>
    <property type="evidence" value="ECO:0007669"/>
    <property type="project" value="UniProtKB-SubCell"/>
</dbReference>
<dbReference type="GO" id="GO:0005524">
    <property type="term" value="F:ATP binding"/>
    <property type="evidence" value="ECO:0007669"/>
    <property type="project" value="UniProtKB-UniRule"/>
</dbReference>
<dbReference type="GO" id="GO:0000287">
    <property type="term" value="F:magnesium ion binding"/>
    <property type="evidence" value="ECO:0007669"/>
    <property type="project" value="UniProtKB-UniRule"/>
</dbReference>
<dbReference type="GO" id="GO:0004826">
    <property type="term" value="F:phenylalanine-tRNA ligase activity"/>
    <property type="evidence" value="ECO:0007669"/>
    <property type="project" value="UniProtKB-UniRule"/>
</dbReference>
<dbReference type="GO" id="GO:0000049">
    <property type="term" value="F:tRNA binding"/>
    <property type="evidence" value="ECO:0007669"/>
    <property type="project" value="InterPro"/>
</dbReference>
<dbReference type="GO" id="GO:0006432">
    <property type="term" value="P:phenylalanyl-tRNA aminoacylation"/>
    <property type="evidence" value="ECO:0007669"/>
    <property type="project" value="UniProtKB-UniRule"/>
</dbReference>
<dbReference type="CDD" id="cd00496">
    <property type="entry name" value="PheRS_alpha_core"/>
    <property type="match status" value="1"/>
</dbReference>
<dbReference type="FunFam" id="3.30.930.10:FF:000003">
    <property type="entry name" value="Phenylalanine--tRNA ligase alpha subunit"/>
    <property type="match status" value="1"/>
</dbReference>
<dbReference type="Gene3D" id="3.30.930.10">
    <property type="entry name" value="Bira Bifunctional Protein, Domain 2"/>
    <property type="match status" value="1"/>
</dbReference>
<dbReference type="HAMAP" id="MF_00281">
    <property type="entry name" value="Phe_tRNA_synth_alpha1"/>
    <property type="match status" value="1"/>
</dbReference>
<dbReference type="InterPro" id="IPR006195">
    <property type="entry name" value="aa-tRNA-synth_II"/>
</dbReference>
<dbReference type="InterPro" id="IPR045864">
    <property type="entry name" value="aa-tRNA-synth_II/BPL/LPL"/>
</dbReference>
<dbReference type="InterPro" id="IPR004529">
    <property type="entry name" value="Phe-tRNA-synth_IIc_asu"/>
</dbReference>
<dbReference type="InterPro" id="IPR004188">
    <property type="entry name" value="Phe-tRNA_ligase_II_N"/>
</dbReference>
<dbReference type="InterPro" id="IPR022911">
    <property type="entry name" value="Phe_tRNA_ligase_alpha1_bac"/>
</dbReference>
<dbReference type="InterPro" id="IPR002319">
    <property type="entry name" value="Phenylalanyl-tRNA_Synthase"/>
</dbReference>
<dbReference type="InterPro" id="IPR010978">
    <property type="entry name" value="tRNA-bd_arm"/>
</dbReference>
<dbReference type="NCBIfam" id="TIGR00468">
    <property type="entry name" value="pheS"/>
    <property type="match status" value="1"/>
</dbReference>
<dbReference type="PANTHER" id="PTHR11538:SF41">
    <property type="entry name" value="PHENYLALANINE--TRNA LIGASE, MITOCHONDRIAL"/>
    <property type="match status" value="1"/>
</dbReference>
<dbReference type="PANTHER" id="PTHR11538">
    <property type="entry name" value="PHENYLALANYL-TRNA SYNTHETASE"/>
    <property type="match status" value="1"/>
</dbReference>
<dbReference type="Pfam" id="PF02912">
    <property type="entry name" value="Phe_tRNA-synt_N"/>
    <property type="match status" value="1"/>
</dbReference>
<dbReference type="Pfam" id="PF01409">
    <property type="entry name" value="tRNA-synt_2d"/>
    <property type="match status" value="1"/>
</dbReference>
<dbReference type="SUPFAM" id="SSF55681">
    <property type="entry name" value="Class II aaRS and biotin synthetases"/>
    <property type="match status" value="1"/>
</dbReference>
<dbReference type="SUPFAM" id="SSF46589">
    <property type="entry name" value="tRNA-binding arm"/>
    <property type="match status" value="1"/>
</dbReference>
<dbReference type="PROSITE" id="PS50862">
    <property type="entry name" value="AA_TRNA_LIGASE_II"/>
    <property type="match status" value="1"/>
</dbReference>
<name>SYFA_MYCBT</name>
<evidence type="ECO:0000255" key="1">
    <source>
        <dbReference type="HAMAP-Rule" id="MF_00281"/>
    </source>
</evidence>
<feature type="chain" id="PRO_1000199319" description="Phenylalanine--tRNA ligase alpha subunit">
    <location>
        <begin position="1"/>
        <end position="341"/>
    </location>
</feature>
<feature type="binding site" evidence="1">
    <location>
        <position position="259"/>
    </location>
    <ligand>
        <name>Mg(2+)</name>
        <dbReference type="ChEBI" id="CHEBI:18420"/>
        <note>shared with beta subunit</note>
    </ligand>
</feature>